<dbReference type="EMBL" id="LT708304">
    <property type="protein sequence ID" value="SIT99576.1"/>
    <property type="molecule type" value="Genomic_DNA"/>
</dbReference>
<dbReference type="RefSeq" id="NP_854635.1">
    <property type="nucleotide sequence ID" value="NC_002945.3"/>
</dbReference>
<dbReference type="RefSeq" id="WP_003404873.1">
    <property type="nucleotide sequence ID" value="NC_002945.4"/>
</dbReference>
<dbReference type="SMR" id="P64770"/>
<dbReference type="KEGG" id="mbo:BQ2027_MB0978C"/>
<dbReference type="PATRIC" id="fig|233413.5.peg.1065"/>
<dbReference type="Proteomes" id="UP000001419">
    <property type="component" value="Chromosome"/>
</dbReference>
<dbReference type="GO" id="GO:0016705">
    <property type="term" value="F:oxidoreductase activity, acting on paired donors, with incorporation or reduction of molecular oxygen"/>
    <property type="evidence" value="ECO:0007669"/>
    <property type="project" value="InterPro"/>
</dbReference>
<dbReference type="Gene3D" id="3.20.20.30">
    <property type="entry name" value="Luciferase-like domain"/>
    <property type="match status" value="1"/>
</dbReference>
<dbReference type="InterPro" id="IPR051260">
    <property type="entry name" value="Diverse_substr_monoxygenases"/>
</dbReference>
<dbReference type="InterPro" id="IPR019921">
    <property type="entry name" value="Lucif-like_OxRdtase_Rv2161c"/>
</dbReference>
<dbReference type="InterPro" id="IPR011251">
    <property type="entry name" value="Luciferase-like_dom"/>
</dbReference>
<dbReference type="InterPro" id="IPR036661">
    <property type="entry name" value="Luciferase-like_sf"/>
</dbReference>
<dbReference type="NCBIfam" id="TIGR03619">
    <property type="entry name" value="F420_Rv2161c"/>
    <property type="match status" value="1"/>
</dbReference>
<dbReference type="PANTHER" id="PTHR30011">
    <property type="entry name" value="ALKANESULFONATE MONOOXYGENASE-RELATED"/>
    <property type="match status" value="1"/>
</dbReference>
<dbReference type="PANTHER" id="PTHR30011:SF32">
    <property type="entry name" value="CONSERVED PROTEIN"/>
    <property type="match status" value="1"/>
</dbReference>
<dbReference type="Pfam" id="PF00296">
    <property type="entry name" value="Bac_luciferase"/>
    <property type="match status" value="1"/>
</dbReference>
<dbReference type="SUPFAM" id="SSF51679">
    <property type="entry name" value="Bacterial luciferase-like"/>
    <property type="match status" value="1"/>
</dbReference>
<reference key="1">
    <citation type="journal article" date="2003" name="Proc. Natl. Acad. Sci. U.S.A.">
        <title>The complete genome sequence of Mycobacterium bovis.</title>
        <authorList>
            <person name="Garnier T."/>
            <person name="Eiglmeier K."/>
            <person name="Camus J.-C."/>
            <person name="Medina N."/>
            <person name="Mansoor H."/>
            <person name="Pryor M."/>
            <person name="Duthoy S."/>
            <person name="Grondin S."/>
            <person name="Lacroix C."/>
            <person name="Monsempe C."/>
            <person name="Simon S."/>
            <person name="Harris B."/>
            <person name="Atkin R."/>
            <person name="Doggett J."/>
            <person name="Mayes R."/>
            <person name="Keating L."/>
            <person name="Wheeler P.R."/>
            <person name="Parkhill J."/>
            <person name="Barrell B.G."/>
            <person name="Cole S.T."/>
            <person name="Gordon S.V."/>
            <person name="Hewinson R.G."/>
        </authorList>
    </citation>
    <scope>NUCLEOTIDE SEQUENCE [LARGE SCALE GENOMIC DNA]</scope>
    <source>
        <strain>ATCC BAA-935 / AF2122/97</strain>
    </source>
</reference>
<reference key="2">
    <citation type="journal article" date="2017" name="Genome Announc.">
        <title>Updated reference genome sequence and annotation of Mycobacterium bovis AF2122/97.</title>
        <authorList>
            <person name="Malone K.M."/>
            <person name="Farrell D."/>
            <person name="Stuber T.P."/>
            <person name="Schubert O.T."/>
            <person name="Aebersold R."/>
            <person name="Robbe-Austerman S."/>
            <person name="Gordon S.V."/>
        </authorList>
    </citation>
    <scope>NUCLEOTIDE SEQUENCE [LARGE SCALE GENOMIC DNA]</scope>
    <scope>GENOME REANNOTATION</scope>
    <source>
        <strain>ATCC BAA-935 / AF2122/97</strain>
    </source>
</reference>
<evidence type="ECO:0000305" key="1"/>
<name>Y978_MYCBO</name>
<keyword id="KW-1185">Reference proteome</keyword>
<comment type="similarity">
    <text evidence="1">To M.tuberculosis Rv2161c and Rv3079c.</text>
</comment>
<gene>
    <name type="ordered locus">BQ2027_MB0978C</name>
</gene>
<accession>P64770</accession>
<accession>A0A1R3XWX3</accession>
<accession>P71557</accession>
<accession>X2BGA8</accession>
<organism>
    <name type="scientific">Mycobacterium bovis (strain ATCC BAA-935 / AF2122/97)</name>
    <dbReference type="NCBI Taxonomy" id="233413"/>
    <lineage>
        <taxon>Bacteria</taxon>
        <taxon>Bacillati</taxon>
        <taxon>Actinomycetota</taxon>
        <taxon>Actinomycetes</taxon>
        <taxon>Mycobacteriales</taxon>
        <taxon>Mycobacteriaceae</taxon>
        <taxon>Mycobacterium</taxon>
        <taxon>Mycobacterium tuberculosis complex</taxon>
    </lineage>
</organism>
<protein>
    <recommendedName>
        <fullName>Uncharacterized protein Mb0978c</fullName>
    </recommendedName>
</protein>
<sequence>MHYGLVLFTSDRGITPAAAARLAESHGFRTFYVPEHTHIPVKRQAAHPTTGDASLPDDRYMRTLDPWVSLGAASAVTSRIRLATAVALPVEHDPITLAKSIATLDHLSHGRVSVGVGFGWNTDELVDHGVPPGRRRTMLREYLEAMRALWTQEEACYDGEFVKFGPSWAWPKPVQPHIPVLVGAAGTEKNFKWIARSADGWITTPRDVDIDEPVKLLQDIWAAAGRDGLPQIVALDVKPVPDKLARWAELGVTEVLFGMPDRSADDAAAYVERLAAKLACCV</sequence>
<proteinExistence type="predicted"/>
<feature type="chain" id="PRO_0000103750" description="Uncharacterized protein Mb0978c">
    <location>
        <begin position="1"/>
        <end position="282"/>
    </location>
</feature>